<gene>
    <name evidence="1" type="primary">nanE</name>
    <name type="ordered locus">SAR0315</name>
</gene>
<protein>
    <recommendedName>
        <fullName evidence="1">Putative N-acetylmannosamine-6-phosphate 2-epimerase</fullName>
        <ecNumber evidence="1">5.1.3.9</ecNumber>
    </recommendedName>
    <alternativeName>
        <fullName evidence="1">ManNAc-6-P epimerase</fullName>
    </alternativeName>
</protein>
<feature type="chain" id="PRO_0000179800" description="Putative N-acetylmannosamine-6-phosphate 2-epimerase">
    <location>
        <begin position="1"/>
        <end position="222"/>
    </location>
</feature>
<organism>
    <name type="scientific">Staphylococcus aureus (strain MRSA252)</name>
    <dbReference type="NCBI Taxonomy" id="282458"/>
    <lineage>
        <taxon>Bacteria</taxon>
        <taxon>Bacillati</taxon>
        <taxon>Bacillota</taxon>
        <taxon>Bacilli</taxon>
        <taxon>Bacillales</taxon>
        <taxon>Staphylococcaceae</taxon>
        <taxon>Staphylococcus</taxon>
    </lineage>
</organism>
<proteinExistence type="inferred from homology"/>
<name>NANE_STAAR</name>
<keyword id="KW-0119">Carbohydrate metabolism</keyword>
<keyword id="KW-0413">Isomerase</keyword>
<dbReference type="EC" id="5.1.3.9" evidence="1"/>
<dbReference type="EMBL" id="BX571856">
    <property type="protein sequence ID" value="CAG39339.1"/>
    <property type="molecule type" value="Genomic_DNA"/>
</dbReference>
<dbReference type="RefSeq" id="WP_000936720.1">
    <property type="nucleotide sequence ID" value="NC_002952.2"/>
</dbReference>
<dbReference type="SMR" id="Q6GJZ8"/>
<dbReference type="KEGG" id="sar:SAR0315"/>
<dbReference type="HOGENOM" id="CLU_086300_1_0_9"/>
<dbReference type="UniPathway" id="UPA00629">
    <property type="reaction ID" value="UER00682"/>
</dbReference>
<dbReference type="Proteomes" id="UP000000596">
    <property type="component" value="Chromosome"/>
</dbReference>
<dbReference type="GO" id="GO:0005829">
    <property type="term" value="C:cytosol"/>
    <property type="evidence" value="ECO:0007669"/>
    <property type="project" value="TreeGrafter"/>
</dbReference>
<dbReference type="GO" id="GO:0047465">
    <property type="term" value="F:N-acylglucosamine-6-phosphate 2-epimerase activity"/>
    <property type="evidence" value="ECO:0007669"/>
    <property type="project" value="UniProtKB-EC"/>
</dbReference>
<dbReference type="GO" id="GO:0005975">
    <property type="term" value="P:carbohydrate metabolic process"/>
    <property type="evidence" value="ECO:0007669"/>
    <property type="project" value="UniProtKB-UniRule"/>
</dbReference>
<dbReference type="GO" id="GO:0006053">
    <property type="term" value="P:N-acetylmannosamine catabolic process"/>
    <property type="evidence" value="ECO:0007669"/>
    <property type="project" value="TreeGrafter"/>
</dbReference>
<dbReference type="GO" id="GO:0019262">
    <property type="term" value="P:N-acetylneuraminate catabolic process"/>
    <property type="evidence" value="ECO:0007669"/>
    <property type="project" value="UniProtKB-UniRule"/>
</dbReference>
<dbReference type="CDD" id="cd04729">
    <property type="entry name" value="NanE"/>
    <property type="match status" value="1"/>
</dbReference>
<dbReference type="FunFam" id="3.20.20.70:FF:000035">
    <property type="entry name" value="Putative N-acetylmannosamine-6-phosphate 2-epimerase"/>
    <property type="match status" value="1"/>
</dbReference>
<dbReference type="Gene3D" id="3.20.20.70">
    <property type="entry name" value="Aldolase class I"/>
    <property type="match status" value="1"/>
</dbReference>
<dbReference type="HAMAP" id="MF_01235">
    <property type="entry name" value="ManNAc6P_epimer"/>
    <property type="match status" value="1"/>
</dbReference>
<dbReference type="InterPro" id="IPR013785">
    <property type="entry name" value="Aldolase_TIM"/>
</dbReference>
<dbReference type="InterPro" id="IPR007260">
    <property type="entry name" value="NanE"/>
</dbReference>
<dbReference type="InterPro" id="IPR011060">
    <property type="entry name" value="RibuloseP-bd_barrel"/>
</dbReference>
<dbReference type="NCBIfam" id="NF002231">
    <property type="entry name" value="PRK01130.1"/>
    <property type="match status" value="1"/>
</dbReference>
<dbReference type="PANTHER" id="PTHR36204">
    <property type="entry name" value="N-ACETYLMANNOSAMINE-6-PHOSPHATE 2-EPIMERASE-RELATED"/>
    <property type="match status" value="1"/>
</dbReference>
<dbReference type="PANTHER" id="PTHR36204:SF1">
    <property type="entry name" value="N-ACETYLMANNOSAMINE-6-PHOSPHATE 2-EPIMERASE-RELATED"/>
    <property type="match status" value="1"/>
</dbReference>
<dbReference type="Pfam" id="PF04131">
    <property type="entry name" value="NanE"/>
    <property type="match status" value="1"/>
</dbReference>
<dbReference type="SUPFAM" id="SSF51366">
    <property type="entry name" value="Ribulose-phoshate binding barrel"/>
    <property type="match status" value="1"/>
</dbReference>
<sequence>MLPHGLIVSCQALPDEPLHSSFIMSKMALAAYEGGAVGIRANTKEDILAIKETVDLPVIGIVKRDYDHSDVFITATSKEVDELIESQCEVIALDATLQQRPKETLDELVSYIRTHAPNVEIMADIATVEEAKNAARLGFDYIGTTLHGYTSYTQGQLLYQNDFQFLKDVLQSVDAKVIAEGNVITPDMYKRVMDLGVHCSVVGGAITRPKEITKRFVQIMED</sequence>
<accession>Q6GJZ8</accession>
<comment type="function">
    <text evidence="1">Converts N-acetylmannosamine-6-phosphate (ManNAc-6-P) to N-acetylglucosamine-6-phosphate (GlcNAc-6-P).</text>
</comment>
<comment type="catalytic activity">
    <reaction evidence="1">
        <text>an N-acyl-D-glucosamine 6-phosphate = an N-acyl-D-mannosamine 6-phosphate</text>
        <dbReference type="Rhea" id="RHEA:23932"/>
        <dbReference type="ChEBI" id="CHEBI:57599"/>
        <dbReference type="ChEBI" id="CHEBI:57666"/>
        <dbReference type="EC" id="5.1.3.9"/>
    </reaction>
</comment>
<comment type="pathway">
    <text evidence="1">Amino-sugar metabolism; N-acetylneuraminate degradation; D-fructose 6-phosphate from N-acetylneuraminate: step 3/5.</text>
</comment>
<comment type="similarity">
    <text evidence="1">Belongs to the NanE family.</text>
</comment>
<reference key="1">
    <citation type="journal article" date="2004" name="Proc. Natl. Acad. Sci. U.S.A.">
        <title>Complete genomes of two clinical Staphylococcus aureus strains: evidence for the rapid evolution of virulence and drug resistance.</title>
        <authorList>
            <person name="Holden M.T.G."/>
            <person name="Feil E.J."/>
            <person name="Lindsay J.A."/>
            <person name="Peacock S.J."/>
            <person name="Day N.P.J."/>
            <person name="Enright M.C."/>
            <person name="Foster T.J."/>
            <person name="Moore C.E."/>
            <person name="Hurst L."/>
            <person name="Atkin R."/>
            <person name="Barron A."/>
            <person name="Bason N."/>
            <person name="Bentley S.D."/>
            <person name="Chillingworth C."/>
            <person name="Chillingworth T."/>
            <person name="Churcher C."/>
            <person name="Clark L."/>
            <person name="Corton C."/>
            <person name="Cronin A."/>
            <person name="Doggett J."/>
            <person name="Dowd L."/>
            <person name="Feltwell T."/>
            <person name="Hance Z."/>
            <person name="Harris B."/>
            <person name="Hauser H."/>
            <person name="Holroyd S."/>
            <person name="Jagels K."/>
            <person name="James K.D."/>
            <person name="Lennard N."/>
            <person name="Line A."/>
            <person name="Mayes R."/>
            <person name="Moule S."/>
            <person name="Mungall K."/>
            <person name="Ormond D."/>
            <person name="Quail M.A."/>
            <person name="Rabbinowitsch E."/>
            <person name="Rutherford K.M."/>
            <person name="Sanders M."/>
            <person name="Sharp S."/>
            <person name="Simmonds M."/>
            <person name="Stevens K."/>
            <person name="Whitehead S."/>
            <person name="Barrell B.G."/>
            <person name="Spratt B.G."/>
            <person name="Parkhill J."/>
        </authorList>
    </citation>
    <scope>NUCLEOTIDE SEQUENCE [LARGE SCALE GENOMIC DNA]</scope>
    <source>
        <strain>MRSA252</strain>
    </source>
</reference>
<evidence type="ECO:0000255" key="1">
    <source>
        <dbReference type="HAMAP-Rule" id="MF_01235"/>
    </source>
</evidence>